<comment type="function">
    <text evidence="1">Catalyzes the conversion of 3-deoxy-D-arabino-heptulosonate 7-phosphate (DAHP) to dehydroquinate (DHQ).</text>
</comment>
<comment type="catalytic activity">
    <reaction evidence="1">
        <text>7-phospho-2-dehydro-3-deoxy-D-arabino-heptonate = 3-dehydroquinate + phosphate</text>
        <dbReference type="Rhea" id="RHEA:21968"/>
        <dbReference type="ChEBI" id="CHEBI:32364"/>
        <dbReference type="ChEBI" id="CHEBI:43474"/>
        <dbReference type="ChEBI" id="CHEBI:58394"/>
        <dbReference type="EC" id="4.2.3.4"/>
    </reaction>
</comment>
<comment type="cofactor">
    <cofactor evidence="1">
        <name>Co(2+)</name>
        <dbReference type="ChEBI" id="CHEBI:48828"/>
    </cofactor>
    <cofactor evidence="1">
        <name>Zn(2+)</name>
        <dbReference type="ChEBI" id="CHEBI:29105"/>
    </cofactor>
    <text evidence="1">Binds 1 divalent metal cation per subunit. Can use either Co(2+) or Zn(2+).</text>
</comment>
<comment type="cofactor">
    <cofactor evidence="1">
        <name>NAD(+)</name>
        <dbReference type="ChEBI" id="CHEBI:57540"/>
    </cofactor>
</comment>
<comment type="pathway">
    <text evidence="1">Metabolic intermediate biosynthesis; chorismate biosynthesis; chorismate from D-erythrose 4-phosphate and phosphoenolpyruvate: step 2/7.</text>
</comment>
<comment type="subcellular location">
    <subcellularLocation>
        <location evidence="1">Cytoplasm</location>
    </subcellularLocation>
</comment>
<comment type="similarity">
    <text evidence="1">Belongs to the sugar phosphate cyclases superfamily. Dehydroquinate synthase family.</text>
</comment>
<organism>
    <name type="scientific">Aliivibrio fischeri (strain ATCC 700601 / ES114)</name>
    <name type="common">Vibrio fischeri</name>
    <dbReference type="NCBI Taxonomy" id="312309"/>
    <lineage>
        <taxon>Bacteria</taxon>
        <taxon>Pseudomonadati</taxon>
        <taxon>Pseudomonadota</taxon>
        <taxon>Gammaproteobacteria</taxon>
        <taxon>Vibrionales</taxon>
        <taxon>Vibrionaceae</taxon>
        <taxon>Aliivibrio</taxon>
    </lineage>
</organism>
<accession>Q5E2G0</accession>
<reference key="1">
    <citation type="journal article" date="2005" name="Proc. Natl. Acad. Sci. U.S.A.">
        <title>Complete genome sequence of Vibrio fischeri: a symbiotic bacterium with pathogenic congeners.</title>
        <authorList>
            <person name="Ruby E.G."/>
            <person name="Urbanowski M."/>
            <person name="Campbell J."/>
            <person name="Dunn A."/>
            <person name="Faini M."/>
            <person name="Gunsalus R."/>
            <person name="Lostroh P."/>
            <person name="Lupp C."/>
            <person name="McCann J."/>
            <person name="Millikan D."/>
            <person name="Schaefer A."/>
            <person name="Stabb E."/>
            <person name="Stevens A."/>
            <person name="Visick K."/>
            <person name="Whistler C."/>
            <person name="Greenberg E.P."/>
        </authorList>
    </citation>
    <scope>NUCLEOTIDE SEQUENCE [LARGE SCALE GENOMIC DNA]</scope>
    <source>
        <strain>ATCC 700601 / ES114</strain>
    </source>
</reference>
<dbReference type="EC" id="4.2.3.4" evidence="1"/>
<dbReference type="EMBL" id="CP000020">
    <property type="protein sequence ID" value="AAW86786.1"/>
    <property type="molecule type" value="Genomic_DNA"/>
</dbReference>
<dbReference type="RefSeq" id="WP_011262699.1">
    <property type="nucleotide sequence ID" value="NZ_CAWLES010000001.1"/>
</dbReference>
<dbReference type="RefSeq" id="YP_205674.1">
    <property type="nucleotide sequence ID" value="NC_006840.2"/>
</dbReference>
<dbReference type="SMR" id="Q5E2G0"/>
<dbReference type="STRING" id="312309.VF_2291"/>
<dbReference type="EnsemblBacteria" id="AAW86786">
    <property type="protein sequence ID" value="AAW86786"/>
    <property type="gene ID" value="VF_2291"/>
</dbReference>
<dbReference type="GeneID" id="54165006"/>
<dbReference type="KEGG" id="vfi:VF_2291"/>
<dbReference type="PATRIC" id="fig|312309.11.peg.2329"/>
<dbReference type="eggNOG" id="COG0337">
    <property type="taxonomic scope" value="Bacteria"/>
</dbReference>
<dbReference type="HOGENOM" id="CLU_001201_0_2_6"/>
<dbReference type="OrthoDB" id="9806583at2"/>
<dbReference type="UniPathway" id="UPA00053">
    <property type="reaction ID" value="UER00085"/>
</dbReference>
<dbReference type="Proteomes" id="UP000000537">
    <property type="component" value="Chromosome I"/>
</dbReference>
<dbReference type="GO" id="GO:0005737">
    <property type="term" value="C:cytoplasm"/>
    <property type="evidence" value="ECO:0007669"/>
    <property type="project" value="UniProtKB-SubCell"/>
</dbReference>
<dbReference type="GO" id="GO:0003856">
    <property type="term" value="F:3-dehydroquinate synthase activity"/>
    <property type="evidence" value="ECO:0007669"/>
    <property type="project" value="UniProtKB-UniRule"/>
</dbReference>
<dbReference type="GO" id="GO:0046872">
    <property type="term" value="F:metal ion binding"/>
    <property type="evidence" value="ECO:0007669"/>
    <property type="project" value="UniProtKB-KW"/>
</dbReference>
<dbReference type="GO" id="GO:0000166">
    <property type="term" value="F:nucleotide binding"/>
    <property type="evidence" value="ECO:0007669"/>
    <property type="project" value="UniProtKB-KW"/>
</dbReference>
<dbReference type="GO" id="GO:0008652">
    <property type="term" value="P:amino acid biosynthetic process"/>
    <property type="evidence" value="ECO:0007669"/>
    <property type="project" value="UniProtKB-KW"/>
</dbReference>
<dbReference type="GO" id="GO:0009073">
    <property type="term" value="P:aromatic amino acid family biosynthetic process"/>
    <property type="evidence" value="ECO:0007669"/>
    <property type="project" value="UniProtKB-KW"/>
</dbReference>
<dbReference type="GO" id="GO:0009423">
    <property type="term" value="P:chorismate biosynthetic process"/>
    <property type="evidence" value="ECO:0007669"/>
    <property type="project" value="UniProtKB-UniRule"/>
</dbReference>
<dbReference type="CDD" id="cd08195">
    <property type="entry name" value="DHQS"/>
    <property type="match status" value="1"/>
</dbReference>
<dbReference type="FunFam" id="1.20.1090.10:FF:000002">
    <property type="entry name" value="3-dehydroquinate synthase"/>
    <property type="match status" value="1"/>
</dbReference>
<dbReference type="FunFam" id="3.40.50.1970:FF:000001">
    <property type="entry name" value="3-dehydroquinate synthase"/>
    <property type="match status" value="1"/>
</dbReference>
<dbReference type="Gene3D" id="3.40.50.1970">
    <property type="match status" value="1"/>
</dbReference>
<dbReference type="Gene3D" id="1.20.1090.10">
    <property type="entry name" value="Dehydroquinate synthase-like - alpha domain"/>
    <property type="match status" value="1"/>
</dbReference>
<dbReference type="HAMAP" id="MF_00110">
    <property type="entry name" value="DHQ_synthase"/>
    <property type="match status" value="1"/>
</dbReference>
<dbReference type="InterPro" id="IPR050071">
    <property type="entry name" value="Dehydroquinate_synthase"/>
</dbReference>
<dbReference type="InterPro" id="IPR016037">
    <property type="entry name" value="DHQ_synth_AroB"/>
</dbReference>
<dbReference type="InterPro" id="IPR030963">
    <property type="entry name" value="DHQ_synth_fam"/>
</dbReference>
<dbReference type="InterPro" id="IPR030960">
    <property type="entry name" value="DHQS/DOIS_N"/>
</dbReference>
<dbReference type="InterPro" id="IPR056179">
    <property type="entry name" value="DHQS_C"/>
</dbReference>
<dbReference type="NCBIfam" id="TIGR01357">
    <property type="entry name" value="aroB"/>
    <property type="match status" value="1"/>
</dbReference>
<dbReference type="PANTHER" id="PTHR43622">
    <property type="entry name" value="3-DEHYDROQUINATE SYNTHASE"/>
    <property type="match status" value="1"/>
</dbReference>
<dbReference type="PANTHER" id="PTHR43622:SF7">
    <property type="entry name" value="3-DEHYDROQUINATE SYNTHASE, CHLOROPLASTIC"/>
    <property type="match status" value="1"/>
</dbReference>
<dbReference type="Pfam" id="PF01761">
    <property type="entry name" value="DHQ_synthase"/>
    <property type="match status" value="1"/>
</dbReference>
<dbReference type="Pfam" id="PF24621">
    <property type="entry name" value="DHQS_C"/>
    <property type="match status" value="1"/>
</dbReference>
<dbReference type="PIRSF" id="PIRSF001455">
    <property type="entry name" value="DHQ_synth"/>
    <property type="match status" value="1"/>
</dbReference>
<dbReference type="SUPFAM" id="SSF56796">
    <property type="entry name" value="Dehydroquinate synthase-like"/>
    <property type="match status" value="1"/>
</dbReference>
<proteinExistence type="inferred from homology"/>
<keyword id="KW-0028">Amino-acid biosynthesis</keyword>
<keyword id="KW-0057">Aromatic amino acid biosynthesis</keyword>
<keyword id="KW-0170">Cobalt</keyword>
<keyword id="KW-0963">Cytoplasm</keyword>
<keyword id="KW-0456">Lyase</keyword>
<keyword id="KW-0479">Metal-binding</keyword>
<keyword id="KW-0520">NAD</keyword>
<keyword id="KW-0547">Nucleotide-binding</keyword>
<keyword id="KW-1185">Reference proteome</keyword>
<keyword id="KW-0862">Zinc</keyword>
<name>AROB_ALIF1</name>
<evidence type="ECO:0000255" key="1">
    <source>
        <dbReference type="HAMAP-Rule" id="MF_00110"/>
    </source>
</evidence>
<feature type="chain" id="PRO_0000231142" description="3-dehydroquinate synthase">
    <location>
        <begin position="1"/>
        <end position="362"/>
    </location>
</feature>
<feature type="binding site" evidence="1">
    <location>
        <begin position="72"/>
        <end position="77"/>
    </location>
    <ligand>
        <name>NAD(+)</name>
        <dbReference type="ChEBI" id="CHEBI:57540"/>
    </ligand>
</feature>
<feature type="binding site" evidence="1">
    <location>
        <begin position="106"/>
        <end position="110"/>
    </location>
    <ligand>
        <name>NAD(+)</name>
        <dbReference type="ChEBI" id="CHEBI:57540"/>
    </ligand>
</feature>
<feature type="binding site" evidence="1">
    <location>
        <begin position="130"/>
        <end position="131"/>
    </location>
    <ligand>
        <name>NAD(+)</name>
        <dbReference type="ChEBI" id="CHEBI:57540"/>
    </ligand>
</feature>
<feature type="binding site" evidence="1">
    <location>
        <position position="143"/>
    </location>
    <ligand>
        <name>NAD(+)</name>
        <dbReference type="ChEBI" id="CHEBI:57540"/>
    </ligand>
</feature>
<feature type="binding site" evidence="1">
    <location>
        <position position="152"/>
    </location>
    <ligand>
        <name>NAD(+)</name>
        <dbReference type="ChEBI" id="CHEBI:57540"/>
    </ligand>
</feature>
<feature type="binding site" evidence="1">
    <location>
        <begin position="170"/>
        <end position="173"/>
    </location>
    <ligand>
        <name>NAD(+)</name>
        <dbReference type="ChEBI" id="CHEBI:57540"/>
    </ligand>
</feature>
<feature type="binding site" evidence="1">
    <location>
        <position position="185"/>
    </location>
    <ligand>
        <name>Zn(2+)</name>
        <dbReference type="ChEBI" id="CHEBI:29105"/>
    </ligand>
</feature>
<feature type="binding site" evidence="1">
    <location>
        <position position="248"/>
    </location>
    <ligand>
        <name>Zn(2+)</name>
        <dbReference type="ChEBI" id="CHEBI:29105"/>
    </ligand>
</feature>
<feature type="binding site" evidence="1">
    <location>
        <position position="265"/>
    </location>
    <ligand>
        <name>Zn(2+)</name>
        <dbReference type="ChEBI" id="CHEBI:29105"/>
    </ligand>
</feature>
<gene>
    <name evidence="1" type="primary">aroB</name>
    <name type="ordered locus">VF_2291</name>
</gene>
<sequence length="362" mass="39556">METIHVDLAERSYPISIGAELFCNPAHFSSVIPAKKRVVVISNVTVAPLYAQQIIDTLNTFECQVSLLELDDGEQYKNLDTFNQILTFLLEENHSRDVTIVALGGGVVGDVVGFASACYQRGVDFIQIPTTLLSQVDSSVGGKTAINHPLGKNMVGAFYQPKAVIIDINCLKTLPEREFAAGMAEVIKYGIIVDREFFDWLDENMDKLYALDHDALIYAISRCCQIKADVVAKDEKESGMRALLNLGHTFGHAIEAEMGYGNWLHGEAVSAGTVMAAVTAQKEGLISQSDVERICSILEKAKLPLKAPKEMTVDAFMKHMMRDKKVLSGKLRLVLPTSIGSSEVVTGVSESVLAEVIEQCKA</sequence>
<protein>
    <recommendedName>
        <fullName evidence="1">3-dehydroquinate synthase</fullName>
        <shortName evidence="1">DHQS</shortName>
        <ecNumber evidence="1">4.2.3.4</ecNumber>
    </recommendedName>
</protein>